<comment type="function">
    <text evidence="1">One of the primary rRNA binding proteins, it binds directly near the 3'-end of the 23S rRNA, where it nucleates assembly of the 50S subunit.</text>
</comment>
<comment type="subunit">
    <text evidence="1">Part of the 50S ribosomal subunit. Forms a cluster with proteins L14 and L19.</text>
</comment>
<comment type="PTM">
    <text evidence="1">Methylated by PrmB.</text>
</comment>
<comment type="similarity">
    <text evidence="1">Belongs to the universal ribosomal protein uL3 family.</text>
</comment>
<organism>
    <name type="scientific">Cronobacter sakazakii (strain ATCC BAA-894)</name>
    <name type="common">Enterobacter sakazakii</name>
    <dbReference type="NCBI Taxonomy" id="290339"/>
    <lineage>
        <taxon>Bacteria</taxon>
        <taxon>Pseudomonadati</taxon>
        <taxon>Pseudomonadota</taxon>
        <taxon>Gammaproteobacteria</taxon>
        <taxon>Enterobacterales</taxon>
        <taxon>Enterobacteriaceae</taxon>
        <taxon>Cronobacter</taxon>
    </lineage>
</organism>
<evidence type="ECO:0000255" key="1">
    <source>
        <dbReference type="HAMAP-Rule" id="MF_01325"/>
    </source>
</evidence>
<evidence type="ECO:0000305" key="2"/>
<proteinExistence type="inferred from homology"/>
<dbReference type="EMBL" id="CP000783">
    <property type="protein sequence ID" value="ABU75311.1"/>
    <property type="molecule type" value="Genomic_DNA"/>
</dbReference>
<dbReference type="RefSeq" id="WP_007681261.1">
    <property type="nucleotide sequence ID" value="NC_009778.1"/>
</dbReference>
<dbReference type="SMR" id="A7MPI7"/>
<dbReference type="GeneID" id="92211466"/>
<dbReference type="KEGG" id="esa:ESA_00002"/>
<dbReference type="HOGENOM" id="CLU_044142_4_1_6"/>
<dbReference type="Proteomes" id="UP000000260">
    <property type="component" value="Chromosome"/>
</dbReference>
<dbReference type="GO" id="GO:0022625">
    <property type="term" value="C:cytosolic large ribosomal subunit"/>
    <property type="evidence" value="ECO:0007669"/>
    <property type="project" value="TreeGrafter"/>
</dbReference>
<dbReference type="GO" id="GO:0019843">
    <property type="term" value="F:rRNA binding"/>
    <property type="evidence" value="ECO:0007669"/>
    <property type="project" value="UniProtKB-UniRule"/>
</dbReference>
<dbReference type="GO" id="GO:0003735">
    <property type="term" value="F:structural constituent of ribosome"/>
    <property type="evidence" value="ECO:0007669"/>
    <property type="project" value="InterPro"/>
</dbReference>
<dbReference type="GO" id="GO:0006412">
    <property type="term" value="P:translation"/>
    <property type="evidence" value="ECO:0007669"/>
    <property type="project" value="UniProtKB-UniRule"/>
</dbReference>
<dbReference type="FunFam" id="2.40.30.10:FF:000004">
    <property type="entry name" value="50S ribosomal protein L3"/>
    <property type="match status" value="1"/>
</dbReference>
<dbReference type="FunFam" id="3.30.160.810:FF:000001">
    <property type="entry name" value="50S ribosomal protein L3"/>
    <property type="match status" value="1"/>
</dbReference>
<dbReference type="Gene3D" id="3.30.160.810">
    <property type="match status" value="1"/>
</dbReference>
<dbReference type="Gene3D" id="2.40.30.10">
    <property type="entry name" value="Translation factors"/>
    <property type="match status" value="1"/>
</dbReference>
<dbReference type="HAMAP" id="MF_01325_B">
    <property type="entry name" value="Ribosomal_uL3_B"/>
    <property type="match status" value="1"/>
</dbReference>
<dbReference type="InterPro" id="IPR000597">
    <property type="entry name" value="Ribosomal_uL3"/>
</dbReference>
<dbReference type="InterPro" id="IPR019927">
    <property type="entry name" value="Ribosomal_uL3_bac/org-type"/>
</dbReference>
<dbReference type="InterPro" id="IPR019926">
    <property type="entry name" value="Ribosomal_uL3_CS"/>
</dbReference>
<dbReference type="InterPro" id="IPR009000">
    <property type="entry name" value="Transl_B-barrel_sf"/>
</dbReference>
<dbReference type="NCBIfam" id="TIGR03625">
    <property type="entry name" value="L3_bact"/>
    <property type="match status" value="1"/>
</dbReference>
<dbReference type="PANTHER" id="PTHR11229">
    <property type="entry name" value="50S RIBOSOMAL PROTEIN L3"/>
    <property type="match status" value="1"/>
</dbReference>
<dbReference type="PANTHER" id="PTHR11229:SF16">
    <property type="entry name" value="LARGE RIBOSOMAL SUBUNIT PROTEIN UL3C"/>
    <property type="match status" value="1"/>
</dbReference>
<dbReference type="Pfam" id="PF00297">
    <property type="entry name" value="Ribosomal_L3"/>
    <property type="match status" value="1"/>
</dbReference>
<dbReference type="SUPFAM" id="SSF50447">
    <property type="entry name" value="Translation proteins"/>
    <property type="match status" value="1"/>
</dbReference>
<dbReference type="PROSITE" id="PS00474">
    <property type="entry name" value="RIBOSOMAL_L3"/>
    <property type="match status" value="1"/>
</dbReference>
<protein>
    <recommendedName>
        <fullName evidence="1">Large ribosomal subunit protein uL3</fullName>
    </recommendedName>
    <alternativeName>
        <fullName evidence="2">50S ribosomal protein L3</fullName>
    </alternativeName>
</protein>
<keyword id="KW-0488">Methylation</keyword>
<keyword id="KW-1185">Reference proteome</keyword>
<keyword id="KW-0687">Ribonucleoprotein</keyword>
<keyword id="KW-0689">Ribosomal protein</keyword>
<keyword id="KW-0694">RNA-binding</keyword>
<keyword id="KW-0699">rRNA-binding</keyword>
<gene>
    <name evidence="1" type="primary">rplC</name>
    <name type="ordered locus">ESA_00002</name>
</gene>
<name>RL3_CROS8</name>
<accession>A7MPI7</accession>
<feature type="chain" id="PRO_1000052046" description="Large ribosomal subunit protein uL3">
    <location>
        <begin position="1"/>
        <end position="209"/>
    </location>
</feature>
<feature type="modified residue" description="N5-methylglutamine" evidence="1">
    <location>
        <position position="150"/>
    </location>
</feature>
<reference key="1">
    <citation type="journal article" date="2010" name="PLoS ONE">
        <title>Genome sequence of Cronobacter sakazakii BAA-894 and comparative genomic hybridization analysis with other Cronobacter species.</title>
        <authorList>
            <person name="Kucerova E."/>
            <person name="Clifton S.W."/>
            <person name="Xia X.Q."/>
            <person name="Long F."/>
            <person name="Porwollik S."/>
            <person name="Fulton L."/>
            <person name="Fronick C."/>
            <person name="Minx P."/>
            <person name="Kyung K."/>
            <person name="Warren W."/>
            <person name="Fulton R."/>
            <person name="Feng D."/>
            <person name="Wollam A."/>
            <person name="Shah N."/>
            <person name="Bhonagiri V."/>
            <person name="Nash W.E."/>
            <person name="Hallsworth-Pepin K."/>
            <person name="Wilson R.K."/>
            <person name="McClelland M."/>
            <person name="Forsythe S.J."/>
        </authorList>
    </citation>
    <scope>NUCLEOTIDE SEQUENCE [LARGE SCALE GENOMIC DNA]</scope>
    <source>
        <strain>ATCC BAA-894</strain>
    </source>
</reference>
<sequence>MIGLVGKKVGMTRIFTEEGVSIPVTVIEVEANRVTQVKDLANDGYRAVQVTTGAKKANRVTKPEAGHFAKAGVEAGRGLWEFRLADGEEYTVGQSISVELFAEVKKVDVTGTSKGKGFAGTVKRWNFRTQDATHGNSLSHRVPGSIGQNQTPGKVFKGKKMAGQLGNERVTVQSLDVVRVDAERNLLLVKGAVPGATGSDLIVKPAVKA</sequence>